<comment type="function">
    <text evidence="2 3 4">Key enzyme in the regulation of glycerol uptake and metabolism. Required for resistance to nonhost Pseudomonas bacteria and to the pathogenic fungus B.cinerea.</text>
</comment>
<comment type="catalytic activity">
    <reaction evidence="4">
        <text>glycerol + ATP = sn-glycerol 3-phosphate + ADP + H(+)</text>
        <dbReference type="Rhea" id="RHEA:21644"/>
        <dbReference type="ChEBI" id="CHEBI:15378"/>
        <dbReference type="ChEBI" id="CHEBI:17754"/>
        <dbReference type="ChEBI" id="CHEBI:30616"/>
        <dbReference type="ChEBI" id="CHEBI:57597"/>
        <dbReference type="ChEBI" id="CHEBI:456216"/>
        <dbReference type="EC" id="2.7.1.30"/>
    </reaction>
</comment>
<comment type="biophysicochemical properties">
    <kinetics>
        <KM evidence="4">58 uM for glycerol</KM>
        <KM evidence="4">268 uM for ATP</KM>
    </kinetics>
</comment>
<comment type="pathway">
    <text>Polyol metabolism; glycerol degradation via glycerol kinase pathway; sn-glycerol 3-phosphate from glycerol: step 1/1.</text>
</comment>
<comment type="subcellular location">
    <subcellularLocation>
        <location evidence="7">Cytoplasm</location>
        <location evidence="7">Cytosol</location>
    </subcellularLocation>
</comment>
<comment type="alternative products">
    <event type="alternative splicing"/>
    <isoform>
        <id>Q9M8L4-1</id>
        <name>1</name>
        <sequence type="displayed"/>
    </isoform>
    <text>A number of isoforms are produced. According to EST sequences.</text>
</comment>
<comment type="tissue specificity">
    <text evidence="4">Highly expressed in germinating seeds and senescent leaves, and at lower levels in roots, leaves, flowers and siliques.</text>
</comment>
<comment type="induction">
    <text evidence="3 5 6">By the bacterial pathogens P.syringae pv. phaseolicola, pv. syringae, pv. tomato and pv. tabaci, and flagellin.</text>
</comment>
<comment type="disruption phenotype">
    <text evidence="4">No visible phenotype under normal growth conditions, but mutant plants accumulate high levels of glycerol, can grow on synthetic medium containing glycerol and have increased resistance to salt, cold, osmotic and drought stresses.</text>
</comment>
<comment type="similarity">
    <text evidence="7">Belongs to the FGGY kinase family.</text>
</comment>
<dbReference type="EC" id="2.7.1.30"/>
<dbReference type="EMBL" id="AY234854">
    <property type="protein sequence ID" value="AAO61418.1"/>
    <property type="molecule type" value="mRNA"/>
</dbReference>
<dbReference type="EMBL" id="AC018849">
    <property type="protein sequence ID" value="AAF27123.1"/>
    <property type="molecule type" value="Genomic_DNA"/>
</dbReference>
<dbReference type="EMBL" id="CP002684">
    <property type="protein sequence ID" value="AEE36407.1"/>
    <property type="molecule type" value="Genomic_DNA"/>
</dbReference>
<dbReference type="EMBL" id="AK316784">
    <property type="protein sequence ID" value="BAH19502.1"/>
    <property type="molecule type" value="mRNA"/>
</dbReference>
<dbReference type="EMBL" id="BT029299">
    <property type="protein sequence ID" value="ABK32113.1"/>
    <property type="molecule type" value="mRNA"/>
</dbReference>
<dbReference type="PIR" id="D96836">
    <property type="entry name" value="D96836"/>
</dbReference>
<dbReference type="RefSeq" id="NP_178161.1">
    <molecule id="Q9M8L4-1"/>
    <property type="nucleotide sequence ID" value="NM_106694.4"/>
</dbReference>
<dbReference type="SMR" id="Q9M8L4"/>
<dbReference type="BioGRID" id="29603">
    <property type="interactions" value="1"/>
</dbReference>
<dbReference type="FunCoup" id="Q9M8L4">
    <property type="interactions" value="1963"/>
</dbReference>
<dbReference type="IntAct" id="Q9M8L4">
    <property type="interactions" value="1"/>
</dbReference>
<dbReference type="STRING" id="3702.Q9M8L4"/>
<dbReference type="PaxDb" id="3702-AT1G80460.1"/>
<dbReference type="ProteomicsDB" id="248588">
    <molecule id="Q9M8L4-1"/>
</dbReference>
<dbReference type="EnsemblPlants" id="AT1G80460.1">
    <molecule id="Q9M8L4-1"/>
    <property type="protein sequence ID" value="AT1G80460.1"/>
    <property type="gene ID" value="AT1G80460"/>
</dbReference>
<dbReference type="GeneID" id="844385"/>
<dbReference type="Gramene" id="AT1G80460.1">
    <molecule id="Q9M8L4-1"/>
    <property type="protein sequence ID" value="AT1G80460.1"/>
    <property type="gene ID" value="AT1G80460"/>
</dbReference>
<dbReference type="KEGG" id="ath:AT1G80460"/>
<dbReference type="Araport" id="AT1G80460"/>
<dbReference type="TAIR" id="AT1G80460">
    <property type="gene designation" value="NHO1"/>
</dbReference>
<dbReference type="eggNOG" id="KOG2517">
    <property type="taxonomic scope" value="Eukaryota"/>
</dbReference>
<dbReference type="HOGENOM" id="CLU_009281_2_3_1"/>
<dbReference type="InParanoid" id="Q9M8L4"/>
<dbReference type="OMA" id="FMLMNIG"/>
<dbReference type="OrthoDB" id="1032671at2759"/>
<dbReference type="PhylomeDB" id="Q9M8L4"/>
<dbReference type="BioCyc" id="ARA:AT1G80460-MONOMER"/>
<dbReference type="SABIO-RK" id="Q9M8L4"/>
<dbReference type="UniPathway" id="UPA00618">
    <property type="reaction ID" value="UER00672"/>
</dbReference>
<dbReference type="CD-CODE" id="4299E36E">
    <property type="entry name" value="Nucleolus"/>
</dbReference>
<dbReference type="PRO" id="PR:Q9M8L4"/>
<dbReference type="Proteomes" id="UP000006548">
    <property type="component" value="Chromosome 1"/>
</dbReference>
<dbReference type="ExpressionAtlas" id="Q9M8L4">
    <property type="expression patterns" value="baseline and differential"/>
</dbReference>
<dbReference type="GO" id="GO:0005829">
    <property type="term" value="C:cytosol"/>
    <property type="evidence" value="ECO:0007005"/>
    <property type="project" value="TAIR"/>
</dbReference>
<dbReference type="GO" id="GO:0005524">
    <property type="term" value="F:ATP binding"/>
    <property type="evidence" value="ECO:0007669"/>
    <property type="project" value="UniProtKB-KW"/>
</dbReference>
<dbReference type="GO" id="GO:0004370">
    <property type="term" value="F:glycerol kinase activity"/>
    <property type="evidence" value="ECO:0000314"/>
    <property type="project" value="TAIR"/>
</dbReference>
<dbReference type="GO" id="GO:0042742">
    <property type="term" value="P:defense response to bacterium"/>
    <property type="evidence" value="ECO:0000315"/>
    <property type="project" value="UniProtKB"/>
</dbReference>
<dbReference type="GO" id="GO:0019563">
    <property type="term" value="P:glycerol catabolic process"/>
    <property type="evidence" value="ECO:0000315"/>
    <property type="project" value="TAIR"/>
</dbReference>
<dbReference type="GO" id="GO:0006072">
    <property type="term" value="P:glycerol-3-phosphate metabolic process"/>
    <property type="evidence" value="ECO:0007669"/>
    <property type="project" value="InterPro"/>
</dbReference>
<dbReference type="GO" id="GO:0009617">
    <property type="term" value="P:response to bacterium"/>
    <property type="evidence" value="ECO:0000270"/>
    <property type="project" value="TAIR"/>
</dbReference>
<dbReference type="GO" id="GO:0010188">
    <property type="term" value="P:response to microbial phytotoxin"/>
    <property type="evidence" value="ECO:0000270"/>
    <property type="project" value="TAIR"/>
</dbReference>
<dbReference type="GO" id="GO:0002237">
    <property type="term" value="P:response to molecule of bacterial origin"/>
    <property type="evidence" value="ECO:0000270"/>
    <property type="project" value="TAIR"/>
</dbReference>
<dbReference type="CDD" id="cd07792">
    <property type="entry name" value="ASKHA_NBD_FGGY_GK1-3-like"/>
    <property type="match status" value="1"/>
</dbReference>
<dbReference type="FunFam" id="3.30.420.40:FF:000007">
    <property type="entry name" value="Glycerol kinase"/>
    <property type="match status" value="1"/>
</dbReference>
<dbReference type="FunFam" id="3.30.420.40:FF:000086">
    <property type="entry name" value="Glycerol kinase"/>
    <property type="match status" value="1"/>
</dbReference>
<dbReference type="Gene3D" id="3.30.420.40">
    <property type="match status" value="2"/>
</dbReference>
<dbReference type="InterPro" id="IPR043129">
    <property type="entry name" value="ATPase_NBD"/>
</dbReference>
<dbReference type="InterPro" id="IPR000577">
    <property type="entry name" value="Carb_kinase_FGGY"/>
</dbReference>
<dbReference type="InterPro" id="IPR018483">
    <property type="entry name" value="Carb_kinase_FGGY_CS"/>
</dbReference>
<dbReference type="InterPro" id="IPR018485">
    <property type="entry name" value="FGGY_C"/>
</dbReference>
<dbReference type="InterPro" id="IPR018484">
    <property type="entry name" value="FGGY_N"/>
</dbReference>
<dbReference type="InterPro" id="IPR042018">
    <property type="entry name" value="GK1-3_metazoan-type"/>
</dbReference>
<dbReference type="InterPro" id="IPR005999">
    <property type="entry name" value="Glycerol_kin"/>
</dbReference>
<dbReference type="NCBIfam" id="TIGR01311">
    <property type="entry name" value="glycerol_kin"/>
    <property type="match status" value="1"/>
</dbReference>
<dbReference type="NCBIfam" id="NF000756">
    <property type="entry name" value="PRK00047.1"/>
    <property type="match status" value="1"/>
</dbReference>
<dbReference type="PANTHER" id="PTHR10196:SF69">
    <property type="entry name" value="GLYCEROL KINASE"/>
    <property type="match status" value="1"/>
</dbReference>
<dbReference type="PANTHER" id="PTHR10196">
    <property type="entry name" value="SUGAR KINASE"/>
    <property type="match status" value="1"/>
</dbReference>
<dbReference type="Pfam" id="PF02782">
    <property type="entry name" value="FGGY_C"/>
    <property type="match status" value="1"/>
</dbReference>
<dbReference type="Pfam" id="PF00370">
    <property type="entry name" value="FGGY_N"/>
    <property type="match status" value="1"/>
</dbReference>
<dbReference type="PIRSF" id="PIRSF000538">
    <property type="entry name" value="GlpK"/>
    <property type="match status" value="1"/>
</dbReference>
<dbReference type="SUPFAM" id="SSF53067">
    <property type="entry name" value="Actin-like ATPase domain"/>
    <property type="match status" value="2"/>
</dbReference>
<dbReference type="PROSITE" id="PS00933">
    <property type="entry name" value="FGGY_KINASES_1"/>
    <property type="match status" value="1"/>
</dbReference>
<gene>
    <name type="primary">GLPK</name>
    <name type="synonym">GLI1</name>
    <name type="synonym">NHO1</name>
    <name type="ordered locus">At1g80460</name>
    <name type="ORF">T21F11.21</name>
</gene>
<reference key="1">
    <citation type="journal article" date="2004" name="Plant J.">
        <title>Glycerol-insensitive Arabidopsis mutants: gli1 seedlings lack glycerol kinase, accumulate glycerol and are more resistant to abiotic stress.</title>
        <authorList>
            <person name="Eastmond P.J."/>
        </authorList>
    </citation>
    <scope>NUCLEOTIDE SEQUENCE [MRNA]</scope>
    <scope>FUNCTION</scope>
    <scope>CATALYTIC ACTIVITY</scope>
    <scope>BIOPHYSICOCHEMICAL PROPERTIES</scope>
    <scope>TISSUE SPECIFICITY</scope>
    <scope>DISRUPTION PHENOTYPE</scope>
</reference>
<reference key="2">
    <citation type="journal article" date="2000" name="Nature">
        <title>Sequence and analysis of chromosome 1 of the plant Arabidopsis thaliana.</title>
        <authorList>
            <person name="Theologis A."/>
            <person name="Ecker J.R."/>
            <person name="Palm C.J."/>
            <person name="Federspiel N.A."/>
            <person name="Kaul S."/>
            <person name="White O."/>
            <person name="Alonso J."/>
            <person name="Altafi H."/>
            <person name="Araujo R."/>
            <person name="Bowman C.L."/>
            <person name="Brooks S.Y."/>
            <person name="Buehler E."/>
            <person name="Chan A."/>
            <person name="Chao Q."/>
            <person name="Chen H."/>
            <person name="Cheuk R.F."/>
            <person name="Chin C.W."/>
            <person name="Chung M.K."/>
            <person name="Conn L."/>
            <person name="Conway A.B."/>
            <person name="Conway A.R."/>
            <person name="Creasy T.H."/>
            <person name="Dewar K."/>
            <person name="Dunn P."/>
            <person name="Etgu P."/>
            <person name="Feldblyum T.V."/>
            <person name="Feng J.-D."/>
            <person name="Fong B."/>
            <person name="Fujii C.Y."/>
            <person name="Gill J.E."/>
            <person name="Goldsmith A.D."/>
            <person name="Haas B."/>
            <person name="Hansen N.F."/>
            <person name="Hughes B."/>
            <person name="Huizar L."/>
            <person name="Hunter J.L."/>
            <person name="Jenkins J."/>
            <person name="Johnson-Hopson C."/>
            <person name="Khan S."/>
            <person name="Khaykin E."/>
            <person name="Kim C.J."/>
            <person name="Koo H.L."/>
            <person name="Kremenetskaia I."/>
            <person name="Kurtz D.B."/>
            <person name="Kwan A."/>
            <person name="Lam B."/>
            <person name="Langin-Hooper S."/>
            <person name="Lee A."/>
            <person name="Lee J.M."/>
            <person name="Lenz C.A."/>
            <person name="Li J.H."/>
            <person name="Li Y.-P."/>
            <person name="Lin X."/>
            <person name="Liu S.X."/>
            <person name="Liu Z.A."/>
            <person name="Luros J.S."/>
            <person name="Maiti R."/>
            <person name="Marziali A."/>
            <person name="Militscher J."/>
            <person name="Miranda M."/>
            <person name="Nguyen M."/>
            <person name="Nierman W.C."/>
            <person name="Osborne B.I."/>
            <person name="Pai G."/>
            <person name="Peterson J."/>
            <person name="Pham P.K."/>
            <person name="Rizzo M."/>
            <person name="Rooney T."/>
            <person name="Rowley D."/>
            <person name="Sakano H."/>
            <person name="Salzberg S.L."/>
            <person name="Schwartz J.R."/>
            <person name="Shinn P."/>
            <person name="Southwick A.M."/>
            <person name="Sun H."/>
            <person name="Tallon L.J."/>
            <person name="Tambunga G."/>
            <person name="Toriumi M.J."/>
            <person name="Town C.D."/>
            <person name="Utterback T."/>
            <person name="Van Aken S."/>
            <person name="Vaysberg M."/>
            <person name="Vysotskaia V.S."/>
            <person name="Walker M."/>
            <person name="Wu D."/>
            <person name="Yu G."/>
            <person name="Fraser C.M."/>
            <person name="Venter J.C."/>
            <person name="Davis R.W."/>
        </authorList>
    </citation>
    <scope>NUCLEOTIDE SEQUENCE [LARGE SCALE GENOMIC DNA]</scope>
    <source>
        <strain>cv. Columbia</strain>
    </source>
</reference>
<reference key="3">
    <citation type="journal article" date="2017" name="Plant J.">
        <title>Araport11: a complete reannotation of the Arabidopsis thaliana reference genome.</title>
        <authorList>
            <person name="Cheng C.Y."/>
            <person name="Krishnakumar V."/>
            <person name="Chan A.P."/>
            <person name="Thibaud-Nissen F."/>
            <person name="Schobel S."/>
            <person name="Town C.D."/>
        </authorList>
    </citation>
    <scope>GENOME REANNOTATION</scope>
    <source>
        <strain>cv. Columbia</strain>
    </source>
</reference>
<reference key="4">
    <citation type="journal article" date="2009" name="DNA Res.">
        <title>Analysis of multiple occurrences of alternative splicing events in Arabidopsis thaliana using novel sequenced full-length cDNAs.</title>
        <authorList>
            <person name="Iida K."/>
            <person name="Fukami-Kobayashi K."/>
            <person name="Toyoda A."/>
            <person name="Sakaki Y."/>
            <person name="Kobayashi M."/>
            <person name="Seki M."/>
            <person name="Shinozaki K."/>
        </authorList>
    </citation>
    <scope>NUCLEOTIDE SEQUENCE [LARGE SCALE MRNA]</scope>
    <source>
        <strain>cv. Columbia</strain>
    </source>
</reference>
<reference key="5">
    <citation type="submission" date="2006-11" db="EMBL/GenBank/DDBJ databases">
        <title>Arabidopsis ORF Clones.</title>
        <authorList>
            <person name="Bautista V.R."/>
            <person name="Kim C.J."/>
            <person name="Chen H."/>
            <person name="Quinitio C."/>
            <person name="Ecker J.R."/>
        </authorList>
    </citation>
    <scope>NUCLEOTIDE SEQUENCE [LARGE SCALE MRNA]</scope>
    <source>
        <strain>cv. Columbia</strain>
    </source>
</reference>
<reference key="6">
    <citation type="journal article" date="2001" name="Plant Cell">
        <title>Arabidopsis NHO1 is required for general resistance against Pseudomonas bacteria.</title>
        <authorList>
            <person name="Lu M."/>
            <person name="Tang X."/>
            <person name="Zhou J.M."/>
        </authorList>
    </citation>
    <scope>FUNCTION</scope>
</reference>
<reference key="7">
    <citation type="journal article" date="2003" name="Proc. Natl. Acad. Sci. U.S.A.">
        <title>Interplay of the Arabidopsis nonhost resistance gene NHO1 with bacterial virulence.</title>
        <authorList>
            <person name="Kang L."/>
            <person name="Li J."/>
            <person name="Zhao T."/>
            <person name="Xiao F."/>
            <person name="Tang X."/>
            <person name="Thilmony R."/>
            <person name="He S."/>
            <person name="Zhou J.M."/>
        </authorList>
    </citation>
    <scope>FUNCTION</scope>
    <scope>INDUCTION BY PATHOGEN</scope>
</reference>
<reference key="8">
    <citation type="journal article" date="2005" name="Proc. Natl. Acad. Sci. U.S.A.">
        <title>Flagellin induces innate immunity in nonhost interactions that is suppressed by Pseudomonas syringae effectors.</title>
        <authorList>
            <person name="Li X."/>
            <person name="Lin H."/>
            <person name="Zhang W."/>
            <person name="Zou Y."/>
            <person name="Zhang J."/>
            <person name="Tang X."/>
            <person name="Zhou J.M."/>
        </authorList>
    </citation>
    <scope>INDUCTION BY FLAGELLIN</scope>
</reference>
<reference key="9">
    <citation type="journal article" date="2012" name="Plant Cell">
        <title>Glycolate oxidase modulates reactive oxygen species-mediated signal transduction during nonhost resistance in Nicotiana benthamiana and Arabidopsis.</title>
        <authorList>
            <person name="Rojas C.M."/>
            <person name="Senthil-Kumar M."/>
            <person name="Wang K."/>
            <person name="Ryu C.M."/>
            <person name="Kaundal A."/>
            <person name="Mysore K.S."/>
        </authorList>
    </citation>
    <scope>INDUCTION BY PATHOGEN</scope>
</reference>
<proteinExistence type="evidence at protein level"/>
<feature type="chain" id="PRO_0000422109" description="Glycerol kinase">
    <location>
        <begin position="1"/>
        <end position="522"/>
    </location>
</feature>
<feature type="binding site" evidence="1">
    <location>
        <position position="15"/>
    </location>
    <ligand>
        <name>substrate</name>
    </ligand>
</feature>
<feature type="binding site" evidence="1">
    <location>
        <position position="19"/>
    </location>
    <ligand>
        <name>ATP</name>
        <dbReference type="ChEBI" id="CHEBI:30616"/>
    </ligand>
</feature>
<feature type="binding site" evidence="1">
    <location>
        <begin position="89"/>
        <end position="90"/>
    </location>
    <ligand>
        <name>substrate</name>
    </ligand>
</feature>
<feature type="binding site" evidence="1">
    <location>
        <position position="143"/>
    </location>
    <ligand>
        <name>substrate</name>
    </ligand>
</feature>
<feature type="binding site" evidence="1">
    <location>
        <begin position="255"/>
        <end position="256"/>
    </location>
    <ligand>
        <name>substrate</name>
    </ligand>
</feature>
<feature type="binding site" evidence="1">
    <location>
        <position position="276"/>
    </location>
    <ligand>
        <name>ATP</name>
        <dbReference type="ChEBI" id="CHEBI:30616"/>
    </ligand>
</feature>
<feature type="binding site" evidence="1">
    <location>
        <position position="321"/>
    </location>
    <ligand>
        <name>ATP</name>
        <dbReference type="ChEBI" id="CHEBI:30616"/>
    </ligand>
</feature>
<feature type="binding site" evidence="1">
    <location>
        <begin position="430"/>
        <end position="434"/>
    </location>
    <ligand>
        <name>ATP</name>
        <dbReference type="ChEBI" id="CHEBI:30616"/>
    </ligand>
</feature>
<feature type="sequence conflict" description="In Ref. 5; ABK32113." evidence="7" ref="5">
    <original>G</original>
    <variation>R</variation>
    <location>
        <position position="467"/>
    </location>
</feature>
<protein>
    <recommendedName>
        <fullName>Glycerol kinase</fullName>
        <shortName>Glycerokinase</shortName>
        <ecNumber>2.7.1.30</ecNumber>
    </recommendedName>
    <alternativeName>
        <fullName>ATP:glycerol 3-phosphotransferase</fullName>
    </alternativeName>
    <alternativeName>
        <fullName>Protein GLYCEROL INSENSITIVE 1</fullName>
    </alternativeName>
    <alternativeName>
        <fullName>Protein NONHOST RESISTANCE TO P. S. PHASEOLICOLA 1</fullName>
    </alternativeName>
</protein>
<accession>Q9M8L4</accession>
<accession>A0JPS9</accession>
<keyword id="KW-0025">Alternative splicing</keyword>
<keyword id="KW-0067">ATP-binding</keyword>
<keyword id="KW-0963">Cytoplasm</keyword>
<keyword id="KW-0319">Glycerol metabolism</keyword>
<keyword id="KW-0418">Kinase</keyword>
<keyword id="KW-0547">Nucleotide-binding</keyword>
<keyword id="KW-0611">Plant defense</keyword>
<keyword id="KW-1185">Reference proteome</keyword>
<keyword id="KW-0808">Transferase</keyword>
<organism>
    <name type="scientific">Arabidopsis thaliana</name>
    <name type="common">Mouse-ear cress</name>
    <dbReference type="NCBI Taxonomy" id="3702"/>
    <lineage>
        <taxon>Eukaryota</taxon>
        <taxon>Viridiplantae</taxon>
        <taxon>Streptophyta</taxon>
        <taxon>Embryophyta</taxon>
        <taxon>Tracheophyta</taxon>
        <taxon>Spermatophyta</taxon>
        <taxon>Magnoliopsida</taxon>
        <taxon>eudicotyledons</taxon>
        <taxon>Gunneridae</taxon>
        <taxon>Pentapetalae</taxon>
        <taxon>rosids</taxon>
        <taxon>malvids</taxon>
        <taxon>Brassicales</taxon>
        <taxon>Brassicaceae</taxon>
        <taxon>Camelineae</taxon>
        <taxon>Arabidopsis</taxon>
    </lineage>
</organism>
<evidence type="ECO:0000250" key="1"/>
<evidence type="ECO:0000269" key="2">
    <source>
    </source>
</evidence>
<evidence type="ECO:0000269" key="3">
    <source>
    </source>
</evidence>
<evidence type="ECO:0000269" key="4">
    <source>
    </source>
</evidence>
<evidence type="ECO:0000269" key="5">
    <source>
    </source>
</evidence>
<evidence type="ECO:0000269" key="6">
    <source>
    </source>
</evidence>
<evidence type="ECO:0000305" key="7"/>
<sequence>MAKENGFIGSIDQGTTSTRFIIYDHDARPVASHQVEFTQFYPEAGWVEHDPMEILESVKVCIAKALDKATADGHNVDGGLKAIGLTDQRETTVVWSKSTGLPLHKAIVWMDARTSSICRRLEKELSGGRSHFVESCGLPISTYFSAMKLLWLMENVDDVKDAIKKGDAIFGTIDTWLIWNMTGGINGGLHVTDVTNASRTMLMNLKTLSWDQDTLKTLGIPAEILPKIVSNSEVIGEICKGWPIPGIKIAGCLGDQHAAMLGQACRKGEAKSTYGTGAFILLNTGEVPIKSGHGLLTTLAYKLGPQAQTNYALEGSIAIAGAAVQWLRDSLGIIKSASEIEDLAAMVDSTGGVYFVPAFNGLFAPWWREDARGVCIGITRFTNKSHIARAVLESMCFQVKDVLDSMNKDAGEKGSLNNGKGEFLLRVDGGATANNLLMQIQADLMGSPVVRPVDIETTALGAAYAAGLAVGFWKEADIFESGEKAKNSKVFRPAMEEGIRKKKVASWCKAVERTFDLADLSI</sequence>
<name>GLPK_ARATH</name>